<feature type="chain" id="PRO_0000052117" description="Cytochrome P450 71D6">
    <location>
        <begin position="1"/>
        <end position="501"/>
    </location>
</feature>
<feature type="binding site" description="axial binding residue" evidence="1">
    <location>
        <position position="442"/>
    </location>
    <ligand>
        <name>heme</name>
        <dbReference type="ChEBI" id="CHEBI:30413"/>
    </ligand>
    <ligandPart>
        <name>Fe</name>
        <dbReference type="ChEBI" id="CHEBI:18248"/>
    </ligandPart>
</feature>
<gene>
    <name type="primary">CYP71D6</name>
</gene>
<organism>
    <name type="scientific">Solanum chacoense</name>
    <name type="common">Chaco potato</name>
    <dbReference type="NCBI Taxonomy" id="4108"/>
    <lineage>
        <taxon>Eukaryota</taxon>
        <taxon>Viridiplantae</taxon>
        <taxon>Streptophyta</taxon>
        <taxon>Embryophyta</taxon>
        <taxon>Tracheophyta</taxon>
        <taxon>Spermatophyta</taxon>
        <taxon>Magnoliopsida</taxon>
        <taxon>eudicotyledons</taxon>
        <taxon>Gunneridae</taxon>
        <taxon>Pentapetalae</taxon>
        <taxon>asterids</taxon>
        <taxon>lamiids</taxon>
        <taxon>Solanales</taxon>
        <taxon>Solanaceae</taxon>
        <taxon>Solanoideae</taxon>
        <taxon>Solaneae</taxon>
        <taxon>Solanum</taxon>
    </lineage>
</organism>
<sequence length="501" mass="57275">MQLISIFLFICFLFLLRKWKKYSKNSQTKKLPPGPWKLPFIGSMHHLAGGRPHRVLRDLAKKYGPLMHLQLGEVSAVVVTSPDMAKEVLKTHDIAFASRPKLLAMDIICYDRCDIAFSPYGEYWKQMRKICVTEVLSAKSVRSFSSIRCDEVVRLIDSIQSSSSSGELVNFKERVIWFTSSMTCRSAFGQLPKEQDMFIKLIREVIRLAEGFDVADIFPSYKFLHVFGRAKRKLLNVHRKVDAIVEDVINEHKKNFATRKNDDHALGGENLIDVLLKLMNDKSLQFPINNDNIKAIIIDMFAAGTETSSTTTVWAMVEMLKNPRVLAKAQAEVREAFRNKVTFDENDVEDLKYLKLVIKETMRLHAPIPLLVPRECRKETEINGYTIPVKTKVMVNVWALGRDPKYWDDVECFKPERFEQCSIDFIGNNFEYLPFGGGRRICPGTSFGLANDYLPLAQLLCHFDWKLPTGMEPKDLDLTELAGMSAASKDDLYLIATPYQP</sequence>
<accession>P93530</accession>
<dbReference type="EC" id="1.14.-.-"/>
<dbReference type="EMBL" id="U48434">
    <property type="protein sequence ID" value="AAB61964.1"/>
    <property type="molecule type" value="mRNA"/>
</dbReference>
<dbReference type="PIR" id="T10493">
    <property type="entry name" value="T10493"/>
</dbReference>
<dbReference type="SMR" id="P93530"/>
<dbReference type="GO" id="GO:0020037">
    <property type="term" value="F:heme binding"/>
    <property type="evidence" value="ECO:0007669"/>
    <property type="project" value="InterPro"/>
</dbReference>
<dbReference type="GO" id="GO:0005506">
    <property type="term" value="F:iron ion binding"/>
    <property type="evidence" value="ECO:0007669"/>
    <property type="project" value="InterPro"/>
</dbReference>
<dbReference type="GO" id="GO:0004497">
    <property type="term" value="F:monooxygenase activity"/>
    <property type="evidence" value="ECO:0007669"/>
    <property type="project" value="UniProtKB-KW"/>
</dbReference>
<dbReference type="GO" id="GO:0016705">
    <property type="term" value="F:oxidoreductase activity, acting on paired donors, with incorporation or reduction of molecular oxygen"/>
    <property type="evidence" value="ECO:0007669"/>
    <property type="project" value="InterPro"/>
</dbReference>
<dbReference type="CDD" id="cd11072">
    <property type="entry name" value="CYP71-like"/>
    <property type="match status" value="1"/>
</dbReference>
<dbReference type="FunFam" id="1.10.630.10:FF:000043">
    <property type="entry name" value="Cytochrome P450 99A2"/>
    <property type="match status" value="1"/>
</dbReference>
<dbReference type="Gene3D" id="1.10.630.10">
    <property type="entry name" value="Cytochrome P450"/>
    <property type="match status" value="1"/>
</dbReference>
<dbReference type="InterPro" id="IPR052306">
    <property type="entry name" value="CYP450_71D"/>
</dbReference>
<dbReference type="InterPro" id="IPR001128">
    <property type="entry name" value="Cyt_P450"/>
</dbReference>
<dbReference type="InterPro" id="IPR017972">
    <property type="entry name" value="Cyt_P450_CS"/>
</dbReference>
<dbReference type="InterPro" id="IPR002401">
    <property type="entry name" value="Cyt_P450_E_grp-I"/>
</dbReference>
<dbReference type="InterPro" id="IPR036396">
    <property type="entry name" value="Cyt_P450_sf"/>
</dbReference>
<dbReference type="PANTHER" id="PTHR47953:SF17">
    <property type="entry name" value="CYTOCHROME P450"/>
    <property type="match status" value="1"/>
</dbReference>
<dbReference type="PANTHER" id="PTHR47953">
    <property type="entry name" value="OS08G0105600 PROTEIN"/>
    <property type="match status" value="1"/>
</dbReference>
<dbReference type="Pfam" id="PF00067">
    <property type="entry name" value="p450"/>
    <property type="match status" value="1"/>
</dbReference>
<dbReference type="PRINTS" id="PR00463">
    <property type="entry name" value="EP450I"/>
</dbReference>
<dbReference type="PRINTS" id="PR00385">
    <property type="entry name" value="P450"/>
</dbReference>
<dbReference type="SUPFAM" id="SSF48264">
    <property type="entry name" value="Cytochrome P450"/>
    <property type="match status" value="1"/>
</dbReference>
<dbReference type="PROSITE" id="PS00086">
    <property type="entry name" value="CYTOCHROME_P450"/>
    <property type="match status" value="1"/>
</dbReference>
<name>C71D6_SOLCH</name>
<protein>
    <recommendedName>
        <fullName>Cytochrome P450 71D6</fullName>
        <ecNumber>1.14.-.-</ecNumber>
    </recommendedName>
</protein>
<comment type="cofactor">
    <cofactor evidence="1">
        <name>heme</name>
        <dbReference type="ChEBI" id="CHEBI:30413"/>
    </cofactor>
</comment>
<comment type="similarity">
    <text evidence="2">Belongs to the cytochrome P450 family.</text>
</comment>
<proteinExistence type="evidence at transcript level"/>
<reference key="1">
    <citation type="journal article" date="1997" name="Gene">
        <title>Isolation and sequence analysis of a cDNA and a related gene for cytochrome P450 proteins from Solanum chacoense.</title>
        <authorList>
            <person name="Hutvagner G."/>
            <person name="Barta E."/>
            <person name="Banfalvi Z."/>
        </authorList>
    </citation>
    <scope>NUCLEOTIDE SEQUENCE [MRNA]</scope>
    <source>
        <strain>cv. PI 320 287</strain>
        <tissue>Leaf</tissue>
    </source>
</reference>
<evidence type="ECO:0000250" key="1"/>
<evidence type="ECO:0000305" key="2"/>
<keyword id="KW-0349">Heme</keyword>
<keyword id="KW-0408">Iron</keyword>
<keyword id="KW-0479">Metal-binding</keyword>
<keyword id="KW-0503">Monooxygenase</keyword>
<keyword id="KW-0560">Oxidoreductase</keyword>